<accession>Q47HQ6</accession>
<proteinExistence type="inferred from homology"/>
<name>TRPF_DECAR</name>
<comment type="catalytic activity">
    <reaction evidence="1">
        <text>N-(5-phospho-beta-D-ribosyl)anthranilate = 1-(2-carboxyphenylamino)-1-deoxy-D-ribulose 5-phosphate</text>
        <dbReference type="Rhea" id="RHEA:21540"/>
        <dbReference type="ChEBI" id="CHEBI:18277"/>
        <dbReference type="ChEBI" id="CHEBI:58613"/>
        <dbReference type="EC" id="5.3.1.24"/>
    </reaction>
</comment>
<comment type="pathway">
    <text evidence="1">Amino-acid biosynthesis; L-tryptophan biosynthesis; L-tryptophan from chorismate: step 3/5.</text>
</comment>
<comment type="similarity">
    <text evidence="1">Belongs to the TrpF family.</text>
</comment>
<sequence length="208" mass="22251">MKTRIKICGLTREEDVDAAVAAGADAIGFVFYPPSPRYVSPQRAAELVKRIPPFVDVVGLFVNEAPEVVRIACEALPINVLQFHGDEDAAYCSQFARPYLRAARVRPGLDLVEFAGSFPDARGLLLDAFVEGYGGGGHVFDWTLIPPNLPSYLVLSGGLTADNVGDAVRRVRPVAVDISSGVEASKGIKDHSKIAAFVAAVRKADESI</sequence>
<dbReference type="EC" id="5.3.1.24" evidence="1"/>
<dbReference type="EMBL" id="CP000089">
    <property type="protein sequence ID" value="AAZ45625.1"/>
    <property type="molecule type" value="Genomic_DNA"/>
</dbReference>
<dbReference type="SMR" id="Q47HQ6"/>
<dbReference type="STRING" id="159087.Daro_0869"/>
<dbReference type="KEGG" id="dar:Daro_0869"/>
<dbReference type="eggNOG" id="COG0135">
    <property type="taxonomic scope" value="Bacteria"/>
</dbReference>
<dbReference type="HOGENOM" id="CLU_076364_2_0_4"/>
<dbReference type="OrthoDB" id="9796196at2"/>
<dbReference type="UniPathway" id="UPA00035">
    <property type="reaction ID" value="UER00042"/>
</dbReference>
<dbReference type="GO" id="GO:0004640">
    <property type="term" value="F:phosphoribosylanthranilate isomerase activity"/>
    <property type="evidence" value="ECO:0007669"/>
    <property type="project" value="UniProtKB-UniRule"/>
</dbReference>
<dbReference type="GO" id="GO:0000162">
    <property type="term" value="P:L-tryptophan biosynthetic process"/>
    <property type="evidence" value="ECO:0007669"/>
    <property type="project" value="UniProtKB-UniRule"/>
</dbReference>
<dbReference type="CDD" id="cd00405">
    <property type="entry name" value="PRAI"/>
    <property type="match status" value="1"/>
</dbReference>
<dbReference type="FunFam" id="3.20.20.70:FF:000075">
    <property type="entry name" value="Tryptophan biosynthesis protein TRP1"/>
    <property type="match status" value="1"/>
</dbReference>
<dbReference type="Gene3D" id="3.20.20.70">
    <property type="entry name" value="Aldolase class I"/>
    <property type="match status" value="1"/>
</dbReference>
<dbReference type="HAMAP" id="MF_00135">
    <property type="entry name" value="PRAI"/>
    <property type="match status" value="1"/>
</dbReference>
<dbReference type="InterPro" id="IPR013785">
    <property type="entry name" value="Aldolase_TIM"/>
</dbReference>
<dbReference type="InterPro" id="IPR001240">
    <property type="entry name" value="PRAI_dom"/>
</dbReference>
<dbReference type="InterPro" id="IPR011060">
    <property type="entry name" value="RibuloseP-bd_barrel"/>
</dbReference>
<dbReference type="InterPro" id="IPR044643">
    <property type="entry name" value="TrpF_fam"/>
</dbReference>
<dbReference type="NCBIfam" id="NF002298">
    <property type="entry name" value="PRK01222.1-4"/>
    <property type="match status" value="1"/>
</dbReference>
<dbReference type="NCBIfam" id="NF002299">
    <property type="entry name" value="PRK01222.1-6"/>
    <property type="match status" value="1"/>
</dbReference>
<dbReference type="PANTHER" id="PTHR42894">
    <property type="entry name" value="N-(5'-PHOSPHORIBOSYL)ANTHRANILATE ISOMERASE"/>
    <property type="match status" value="1"/>
</dbReference>
<dbReference type="PANTHER" id="PTHR42894:SF1">
    <property type="entry name" value="N-(5'-PHOSPHORIBOSYL)ANTHRANILATE ISOMERASE"/>
    <property type="match status" value="1"/>
</dbReference>
<dbReference type="Pfam" id="PF00697">
    <property type="entry name" value="PRAI"/>
    <property type="match status" value="1"/>
</dbReference>
<dbReference type="SUPFAM" id="SSF51366">
    <property type="entry name" value="Ribulose-phoshate binding barrel"/>
    <property type="match status" value="1"/>
</dbReference>
<keyword id="KW-0028">Amino-acid biosynthesis</keyword>
<keyword id="KW-0057">Aromatic amino acid biosynthesis</keyword>
<keyword id="KW-0413">Isomerase</keyword>
<keyword id="KW-0822">Tryptophan biosynthesis</keyword>
<organism>
    <name type="scientific">Dechloromonas aromatica (strain RCB)</name>
    <dbReference type="NCBI Taxonomy" id="159087"/>
    <lineage>
        <taxon>Bacteria</taxon>
        <taxon>Pseudomonadati</taxon>
        <taxon>Pseudomonadota</taxon>
        <taxon>Betaproteobacteria</taxon>
        <taxon>Rhodocyclales</taxon>
        <taxon>Azonexaceae</taxon>
        <taxon>Dechloromonas</taxon>
    </lineage>
</organism>
<feature type="chain" id="PRO_1000197098" description="N-(5'-phosphoribosyl)anthranilate isomerase">
    <location>
        <begin position="1"/>
        <end position="208"/>
    </location>
</feature>
<gene>
    <name evidence="1" type="primary">trpF</name>
    <name type="ordered locus">Daro_0869</name>
</gene>
<reference key="1">
    <citation type="journal article" date="2009" name="BMC Genomics">
        <title>Metabolic analysis of the soil microbe Dechloromonas aromatica str. RCB: indications of a surprisingly complex life-style and cryptic anaerobic pathways for aromatic degradation.</title>
        <authorList>
            <person name="Salinero K.K."/>
            <person name="Keller K."/>
            <person name="Feil W.S."/>
            <person name="Feil H."/>
            <person name="Trong S."/>
            <person name="Di Bartolo G."/>
            <person name="Lapidus A."/>
        </authorList>
    </citation>
    <scope>NUCLEOTIDE SEQUENCE [LARGE SCALE GENOMIC DNA]</scope>
    <source>
        <strain>RCB</strain>
    </source>
</reference>
<evidence type="ECO:0000255" key="1">
    <source>
        <dbReference type="HAMAP-Rule" id="MF_00135"/>
    </source>
</evidence>
<protein>
    <recommendedName>
        <fullName evidence="1">N-(5'-phosphoribosyl)anthranilate isomerase</fullName>
        <shortName evidence="1">PRAI</shortName>
        <ecNumber evidence="1">5.3.1.24</ecNumber>
    </recommendedName>
</protein>